<gene>
    <name evidence="1" type="primary">rpmC</name>
    <name type="ordered locus">PSPA7_0845</name>
</gene>
<accession>A6UZJ6</accession>
<name>RL29_PSEP7</name>
<evidence type="ECO:0000255" key="1">
    <source>
        <dbReference type="HAMAP-Rule" id="MF_00374"/>
    </source>
</evidence>
<evidence type="ECO:0000305" key="2"/>
<proteinExistence type="inferred from homology"/>
<reference key="1">
    <citation type="submission" date="2007-06" db="EMBL/GenBank/DDBJ databases">
        <authorList>
            <person name="Dodson R.J."/>
            <person name="Harkins D."/>
            <person name="Paulsen I.T."/>
        </authorList>
    </citation>
    <scope>NUCLEOTIDE SEQUENCE [LARGE SCALE GENOMIC DNA]</scope>
    <source>
        <strain>DSM 24068 / PA7</strain>
    </source>
</reference>
<organism>
    <name type="scientific">Pseudomonas paraeruginosa (strain DSM 24068 / PA7)</name>
    <name type="common">Pseudomonas aeruginosa (strain PA7)</name>
    <dbReference type="NCBI Taxonomy" id="381754"/>
    <lineage>
        <taxon>Bacteria</taxon>
        <taxon>Pseudomonadati</taxon>
        <taxon>Pseudomonadota</taxon>
        <taxon>Gammaproteobacteria</taxon>
        <taxon>Pseudomonadales</taxon>
        <taxon>Pseudomonadaceae</taxon>
        <taxon>Pseudomonas</taxon>
        <taxon>Pseudomonas paraeruginosa</taxon>
    </lineage>
</organism>
<keyword id="KW-0687">Ribonucleoprotein</keyword>
<keyword id="KW-0689">Ribosomal protein</keyword>
<sequence length="63" mass="7201">MKANELREKSVEQLNEQLLGLLRDQFNLRMQKATGQLGQSHLLSQVKRDIARVKTVLNQQAGK</sequence>
<protein>
    <recommendedName>
        <fullName evidence="1">Large ribosomal subunit protein uL29</fullName>
    </recommendedName>
    <alternativeName>
        <fullName evidence="2">50S ribosomal protein L29</fullName>
    </alternativeName>
</protein>
<feature type="chain" id="PRO_1000007561" description="Large ribosomal subunit protein uL29">
    <location>
        <begin position="1"/>
        <end position="63"/>
    </location>
</feature>
<comment type="similarity">
    <text evidence="1">Belongs to the universal ribosomal protein uL29 family.</text>
</comment>
<dbReference type="EMBL" id="CP000744">
    <property type="protein sequence ID" value="ABR83048.1"/>
    <property type="molecule type" value="Genomic_DNA"/>
</dbReference>
<dbReference type="RefSeq" id="WP_003093720.1">
    <property type="nucleotide sequence ID" value="NC_009656.1"/>
</dbReference>
<dbReference type="SMR" id="A6UZJ6"/>
<dbReference type="GeneID" id="79911813"/>
<dbReference type="KEGG" id="pap:PSPA7_0845"/>
<dbReference type="HOGENOM" id="CLU_158491_1_2_6"/>
<dbReference type="Proteomes" id="UP000001582">
    <property type="component" value="Chromosome"/>
</dbReference>
<dbReference type="GO" id="GO:0022625">
    <property type="term" value="C:cytosolic large ribosomal subunit"/>
    <property type="evidence" value="ECO:0007669"/>
    <property type="project" value="TreeGrafter"/>
</dbReference>
<dbReference type="GO" id="GO:0003735">
    <property type="term" value="F:structural constituent of ribosome"/>
    <property type="evidence" value="ECO:0007669"/>
    <property type="project" value="InterPro"/>
</dbReference>
<dbReference type="GO" id="GO:0006412">
    <property type="term" value="P:translation"/>
    <property type="evidence" value="ECO:0007669"/>
    <property type="project" value="UniProtKB-UniRule"/>
</dbReference>
<dbReference type="CDD" id="cd00427">
    <property type="entry name" value="Ribosomal_L29_HIP"/>
    <property type="match status" value="1"/>
</dbReference>
<dbReference type="FunFam" id="1.10.287.310:FF:000001">
    <property type="entry name" value="50S ribosomal protein L29"/>
    <property type="match status" value="1"/>
</dbReference>
<dbReference type="Gene3D" id="1.10.287.310">
    <property type="match status" value="1"/>
</dbReference>
<dbReference type="HAMAP" id="MF_00374">
    <property type="entry name" value="Ribosomal_uL29"/>
    <property type="match status" value="1"/>
</dbReference>
<dbReference type="InterPro" id="IPR050063">
    <property type="entry name" value="Ribosomal_protein_uL29"/>
</dbReference>
<dbReference type="InterPro" id="IPR001854">
    <property type="entry name" value="Ribosomal_uL29"/>
</dbReference>
<dbReference type="InterPro" id="IPR018254">
    <property type="entry name" value="Ribosomal_uL29_CS"/>
</dbReference>
<dbReference type="InterPro" id="IPR036049">
    <property type="entry name" value="Ribosomal_uL29_sf"/>
</dbReference>
<dbReference type="NCBIfam" id="TIGR00012">
    <property type="entry name" value="L29"/>
    <property type="match status" value="1"/>
</dbReference>
<dbReference type="PANTHER" id="PTHR10916">
    <property type="entry name" value="60S RIBOSOMAL PROTEIN L35/50S RIBOSOMAL PROTEIN L29"/>
    <property type="match status" value="1"/>
</dbReference>
<dbReference type="PANTHER" id="PTHR10916:SF0">
    <property type="entry name" value="LARGE RIBOSOMAL SUBUNIT PROTEIN UL29C"/>
    <property type="match status" value="1"/>
</dbReference>
<dbReference type="Pfam" id="PF00831">
    <property type="entry name" value="Ribosomal_L29"/>
    <property type="match status" value="1"/>
</dbReference>
<dbReference type="SUPFAM" id="SSF46561">
    <property type="entry name" value="Ribosomal protein L29 (L29p)"/>
    <property type="match status" value="1"/>
</dbReference>
<dbReference type="PROSITE" id="PS00579">
    <property type="entry name" value="RIBOSOMAL_L29"/>
    <property type="match status" value="1"/>
</dbReference>